<keyword id="KW-0004">4Fe-4S</keyword>
<keyword id="KW-0227">DNA damage</keyword>
<keyword id="KW-0234">DNA repair</keyword>
<keyword id="KW-0326">Glycosidase</keyword>
<keyword id="KW-0378">Hydrolase</keyword>
<keyword id="KW-0408">Iron</keyword>
<keyword id="KW-0411">Iron-sulfur</keyword>
<keyword id="KW-0456">Lyase</keyword>
<keyword id="KW-0479">Metal-binding</keyword>
<keyword id="KW-0496">Mitochondrion</keyword>
<keyword id="KW-0539">Nucleus</keyword>
<keyword id="KW-1185">Reference proteome</keyword>
<keyword id="KW-0809">Transit peptide</keyword>
<gene>
    <name evidence="1" type="primary">NTH1</name>
    <name type="ordered locus">ECU08_0880</name>
</gene>
<dbReference type="EC" id="3.2.2.-" evidence="1"/>
<dbReference type="EC" id="4.2.99.18" evidence="1"/>
<dbReference type="EMBL" id="AL590448">
    <property type="protein sequence ID" value="CAD26394.1"/>
    <property type="molecule type" value="Genomic_DNA"/>
</dbReference>
<dbReference type="RefSeq" id="NP_597218.1">
    <property type="nucleotide sequence ID" value="NM_001041827.1"/>
</dbReference>
<dbReference type="SMR" id="Q8SRB8"/>
<dbReference type="FunCoup" id="Q8SRB8">
    <property type="interactions" value="67"/>
</dbReference>
<dbReference type="STRING" id="284813.Q8SRB8"/>
<dbReference type="GeneID" id="859640"/>
<dbReference type="KEGG" id="ecu:ECU08_0880"/>
<dbReference type="VEuPathDB" id="MicrosporidiaDB:ECU08_0880"/>
<dbReference type="HOGENOM" id="CLU_012862_3_4_1"/>
<dbReference type="InParanoid" id="Q8SRB8"/>
<dbReference type="OMA" id="QIIWYGR"/>
<dbReference type="OrthoDB" id="2099276at2759"/>
<dbReference type="Proteomes" id="UP000000819">
    <property type="component" value="Chromosome VIII"/>
</dbReference>
<dbReference type="GO" id="GO:0005739">
    <property type="term" value="C:mitochondrion"/>
    <property type="evidence" value="ECO:0007669"/>
    <property type="project" value="UniProtKB-SubCell"/>
</dbReference>
<dbReference type="GO" id="GO:0005634">
    <property type="term" value="C:nucleus"/>
    <property type="evidence" value="ECO:0007669"/>
    <property type="project" value="UniProtKB-SubCell"/>
</dbReference>
<dbReference type="GO" id="GO:0051539">
    <property type="term" value="F:4 iron, 4 sulfur cluster binding"/>
    <property type="evidence" value="ECO:0007669"/>
    <property type="project" value="UniProtKB-KW"/>
</dbReference>
<dbReference type="GO" id="GO:0140078">
    <property type="term" value="F:class I DNA-(apurinic or apyrimidinic site) endonuclease activity"/>
    <property type="evidence" value="ECO:0007669"/>
    <property type="project" value="UniProtKB-EC"/>
</dbReference>
<dbReference type="GO" id="GO:0003677">
    <property type="term" value="F:DNA binding"/>
    <property type="evidence" value="ECO:0007669"/>
    <property type="project" value="UniProtKB-UniRule"/>
</dbReference>
<dbReference type="GO" id="GO:0046872">
    <property type="term" value="F:metal ion binding"/>
    <property type="evidence" value="ECO:0007669"/>
    <property type="project" value="UniProtKB-KW"/>
</dbReference>
<dbReference type="GO" id="GO:0000703">
    <property type="term" value="F:oxidized pyrimidine nucleobase lesion DNA N-glycosylase activity"/>
    <property type="evidence" value="ECO:0007669"/>
    <property type="project" value="UniProtKB-UniRule"/>
</dbReference>
<dbReference type="GO" id="GO:0006285">
    <property type="term" value="P:base-excision repair, AP site formation"/>
    <property type="evidence" value="ECO:0007669"/>
    <property type="project" value="UniProtKB-UniRule"/>
</dbReference>
<dbReference type="GO" id="GO:0006289">
    <property type="term" value="P:nucleotide-excision repair"/>
    <property type="evidence" value="ECO:0007669"/>
    <property type="project" value="TreeGrafter"/>
</dbReference>
<dbReference type="CDD" id="cd00056">
    <property type="entry name" value="ENDO3c"/>
    <property type="match status" value="1"/>
</dbReference>
<dbReference type="FunFam" id="1.10.340.30:FF:000001">
    <property type="entry name" value="Endonuclease III"/>
    <property type="match status" value="1"/>
</dbReference>
<dbReference type="Gene3D" id="1.10.1670.10">
    <property type="entry name" value="Helix-hairpin-Helix base-excision DNA repair enzymes (C-terminal)"/>
    <property type="match status" value="1"/>
</dbReference>
<dbReference type="Gene3D" id="1.10.340.30">
    <property type="entry name" value="Hypothetical protein, domain 2"/>
    <property type="match status" value="1"/>
</dbReference>
<dbReference type="HAMAP" id="MF_03183">
    <property type="entry name" value="Endonuclease_III_Nth"/>
    <property type="match status" value="1"/>
</dbReference>
<dbReference type="InterPro" id="IPR011257">
    <property type="entry name" value="DNA_glycosylase"/>
</dbReference>
<dbReference type="InterPro" id="IPR003651">
    <property type="entry name" value="Endonuclease3_FeS-loop_motif"/>
</dbReference>
<dbReference type="InterPro" id="IPR004035">
    <property type="entry name" value="Endouclease-III_FeS-bd_BS"/>
</dbReference>
<dbReference type="InterPro" id="IPR003265">
    <property type="entry name" value="HhH-GPD_domain"/>
</dbReference>
<dbReference type="InterPro" id="IPR023170">
    <property type="entry name" value="HhH_base_excis_C"/>
</dbReference>
<dbReference type="InterPro" id="IPR030841">
    <property type="entry name" value="NTH1"/>
</dbReference>
<dbReference type="PANTHER" id="PTHR43286">
    <property type="entry name" value="ENDONUCLEASE III-LIKE PROTEIN 1"/>
    <property type="match status" value="1"/>
</dbReference>
<dbReference type="PANTHER" id="PTHR43286:SF1">
    <property type="entry name" value="ENDONUCLEASE III-LIKE PROTEIN 1"/>
    <property type="match status" value="1"/>
</dbReference>
<dbReference type="Pfam" id="PF00730">
    <property type="entry name" value="HhH-GPD"/>
    <property type="match status" value="1"/>
</dbReference>
<dbReference type="PIRSF" id="PIRSF001435">
    <property type="entry name" value="Nth"/>
    <property type="match status" value="1"/>
</dbReference>
<dbReference type="SMART" id="SM00478">
    <property type="entry name" value="ENDO3c"/>
    <property type="match status" value="1"/>
</dbReference>
<dbReference type="SMART" id="SM00525">
    <property type="entry name" value="FES"/>
    <property type="match status" value="1"/>
</dbReference>
<dbReference type="SUPFAM" id="SSF48150">
    <property type="entry name" value="DNA-glycosylase"/>
    <property type="match status" value="1"/>
</dbReference>
<dbReference type="PROSITE" id="PS00764">
    <property type="entry name" value="ENDONUCLEASE_III_1"/>
    <property type="match status" value="1"/>
</dbReference>
<reference key="1">
    <citation type="journal article" date="2001" name="Nature">
        <title>Genome sequence and gene compaction of the eukaryote parasite Encephalitozoon cuniculi.</title>
        <authorList>
            <person name="Katinka M.D."/>
            <person name="Duprat S."/>
            <person name="Cornillot E."/>
            <person name="Metenier G."/>
            <person name="Thomarat F."/>
            <person name="Prensier G."/>
            <person name="Barbe V."/>
            <person name="Peyretaillade E."/>
            <person name="Brottier P."/>
            <person name="Wincker P."/>
            <person name="Delbac F."/>
            <person name="El Alaoui H."/>
            <person name="Peyret P."/>
            <person name="Saurin W."/>
            <person name="Gouy M."/>
            <person name="Weissenbach J."/>
            <person name="Vivares C.P."/>
        </authorList>
    </citation>
    <scope>NUCLEOTIDE SEQUENCE [LARGE SCALE GENOMIC DNA]</scope>
    <source>
        <strain>GB-M1</strain>
    </source>
</reference>
<reference key="2">
    <citation type="journal article" date="2006" name="Proteomics">
        <title>Proteomic analysis of the eukaryotic parasite Encephalitozoon cuniculi (microsporidia): a reference map for proteins expressed in late sporogonial stages.</title>
        <authorList>
            <person name="Brosson D."/>
            <person name="Kuhn L."/>
            <person name="Delbac F."/>
            <person name="Garin J."/>
            <person name="Vivares C.P."/>
            <person name="Texier C."/>
        </authorList>
    </citation>
    <scope>IDENTIFICATION BY MASS SPECTROMETRY [LARGE SCALE ANALYSIS]</scope>
    <scope>DEVELOPMENTAL STAGE</scope>
    <scope>SUBCELLULAR LOCATION</scope>
</reference>
<name>NTH_ENCCU</name>
<sequence>MGSASGEEREGPLGLYLEIKMQRKDIVSPVDTMGCSITPSCRTEEERRFHILVSLLLSSQTKDEVTYEAMARLRKLLPESAATDGEARGGLTIERVANSDVKHINECIKKVGFHNRKAANLKKIAEILREKGLPREMKDLISLPGIGNKMALLYMSHACNRTVGISVDTHVHRISNRIGLVRTRDVESTRRELERVVPRKEWKTINNILVGFGQTICVAKRPRCEECCIRGRCPSSLF</sequence>
<comment type="function">
    <text evidence="1">Bifunctional DNA N-glycosylase with associated apurinic/apyrimidinic (AP) lyase function that catalyzes the first step in base excision repair (BER), the primary repair pathway for the repair of oxidative DNA damage. The DNA N-glycosylase activity releases the damaged DNA base from DNA by cleaving the N-glycosidic bond, leaving an AP site. The AP lyase activity cleaves the phosphodiester bond 3' to the AP site by a beta-elimination. Primarily recognizes and repairs oxidative base damage of pyrimidines.</text>
</comment>
<comment type="catalytic activity">
    <reaction evidence="1">
        <text>2'-deoxyribonucleotide-(2'-deoxyribose 5'-phosphate)-2'-deoxyribonucleotide-DNA = a 3'-end 2'-deoxyribonucleotide-(2,3-dehydro-2,3-deoxyribose 5'-phosphate)-DNA + a 5'-end 5'-phospho-2'-deoxyribonucleoside-DNA + H(+)</text>
        <dbReference type="Rhea" id="RHEA:66592"/>
        <dbReference type="Rhea" id="RHEA-COMP:13180"/>
        <dbReference type="Rhea" id="RHEA-COMP:16897"/>
        <dbReference type="Rhea" id="RHEA-COMP:17067"/>
        <dbReference type="ChEBI" id="CHEBI:15378"/>
        <dbReference type="ChEBI" id="CHEBI:136412"/>
        <dbReference type="ChEBI" id="CHEBI:157695"/>
        <dbReference type="ChEBI" id="CHEBI:167181"/>
        <dbReference type="EC" id="4.2.99.18"/>
    </reaction>
</comment>
<comment type="cofactor">
    <cofactor evidence="1">
        <name>[4Fe-4S] cluster</name>
        <dbReference type="ChEBI" id="CHEBI:49883"/>
    </cofactor>
    <text evidence="1">Binds 1 [4Fe-4S] cluster. The cluster does not appear to play a role in catalysis, but is probably involved in the proper positioning of the enzyme along the DNA strand.</text>
</comment>
<comment type="subcellular location">
    <subcellularLocation>
        <location evidence="1">Nucleus</location>
    </subcellularLocation>
    <subcellularLocation>
        <location evidence="1">Mitochondrion</location>
    </subcellularLocation>
</comment>
<comment type="developmental stage">
    <text evidence="2">Expressed in late sporogonial stages.</text>
</comment>
<comment type="similarity">
    <text evidence="1">Belongs to the Nth/MutY family.</text>
</comment>
<protein>
    <recommendedName>
        <fullName evidence="1">Endonuclease III homolog</fullName>
        <ecNumber evidence="1">3.2.2.-</ecNumber>
        <ecNumber evidence="1">4.2.99.18</ecNumber>
    </recommendedName>
    <alternativeName>
        <fullName evidence="1">Bifunctional DNA N-glycosylase/DNA-(apurinic or apyrimidinic site) lyase</fullName>
        <shortName evidence="1">DNA glycosylase/AP lyase</shortName>
    </alternativeName>
</protein>
<proteinExistence type="evidence at protein level"/>
<feature type="chain" id="PRO_0000382919" description="Endonuclease III homolog">
    <location>
        <begin position="1"/>
        <end position="238"/>
    </location>
</feature>
<feature type="domain" description="HhH" evidence="1">
    <location>
        <begin position="129"/>
        <end position="155"/>
    </location>
</feature>
<feature type="active site" description="Nucleophile; for N-glycosylase activity" evidence="1">
    <location>
        <position position="149"/>
    </location>
</feature>
<feature type="binding site" evidence="1">
    <location>
        <position position="217"/>
    </location>
    <ligand>
        <name>[4Fe-4S] cluster</name>
        <dbReference type="ChEBI" id="CHEBI:49883"/>
    </ligand>
</feature>
<feature type="binding site" evidence="1">
    <location>
        <position position="224"/>
    </location>
    <ligand>
        <name>[4Fe-4S] cluster</name>
        <dbReference type="ChEBI" id="CHEBI:49883"/>
    </ligand>
</feature>
<feature type="binding site" evidence="1">
    <location>
        <position position="227"/>
    </location>
    <ligand>
        <name>[4Fe-4S] cluster</name>
        <dbReference type="ChEBI" id="CHEBI:49883"/>
    </ligand>
</feature>
<feature type="binding site" evidence="1">
    <location>
        <position position="233"/>
    </location>
    <ligand>
        <name>[4Fe-4S] cluster</name>
        <dbReference type="ChEBI" id="CHEBI:49883"/>
    </ligand>
</feature>
<feature type="site" description="Important for catalytic activity" evidence="1">
    <location>
        <position position="168"/>
    </location>
</feature>
<organism>
    <name type="scientific">Encephalitozoon cuniculi (strain GB-M1)</name>
    <name type="common">Microsporidian parasite</name>
    <dbReference type="NCBI Taxonomy" id="284813"/>
    <lineage>
        <taxon>Eukaryota</taxon>
        <taxon>Fungi</taxon>
        <taxon>Fungi incertae sedis</taxon>
        <taxon>Microsporidia</taxon>
        <taxon>Unikaryonidae</taxon>
        <taxon>Encephalitozoon</taxon>
    </lineage>
</organism>
<evidence type="ECO:0000255" key="1">
    <source>
        <dbReference type="HAMAP-Rule" id="MF_03183"/>
    </source>
</evidence>
<evidence type="ECO:0000269" key="2">
    <source>
    </source>
</evidence>
<accession>Q8SRB8</accession>